<evidence type="ECO:0000255" key="1">
    <source>
        <dbReference type="HAMAP-Rule" id="MF_00805"/>
    </source>
</evidence>
<protein>
    <recommendedName>
        <fullName evidence="1">Citrate lyase acyl carrier protein</fullName>
    </recommendedName>
    <alternativeName>
        <fullName evidence="1">Citrate lyase gamma chain</fullName>
    </alternativeName>
</protein>
<keyword id="KW-0963">Cytoplasm</keyword>
<keyword id="KW-0597">Phosphoprotein</keyword>
<keyword id="KW-1185">Reference proteome</keyword>
<feature type="chain" id="PRO_1000047064" description="Citrate lyase acyl carrier protein">
    <location>
        <begin position="1"/>
        <end position="98"/>
    </location>
</feature>
<feature type="modified residue" description="O-(phosphoribosyl dephospho-coenzyme A)serine" evidence="1">
    <location>
        <position position="14"/>
    </location>
</feature>
<organism>
    <name type="scientific">Citrobacter koseri (strain ATCC BAA-895 / CDC 4225-83 / SGSC4696)</name>
    <dbReference type="NCBI Taxonomy" id="290338"/>
    <lineage>
        <taxon>Bacteria</taxon>
        <taxon>Pseudomonadati</taxon>
        <taxon>Pseudomonadota</taxon>
        <taxon>Gammaproteobacteria</taxon>
        <taxon>Enterobacterales</taxon>
        <taxon>Enterobacteriaceae</taxon>
        <taxon>Citrobacter</taxon>
    </lineage>
</organism>
<comment type="function">
    <text evidence="1">Covalent carrier of the coenzyme of citrate lyase.</text>
</comment>
<comment type="subunit">
    <text evidence="1">Oligomer with a subunit composition of (alpha,beta,gamma)6.</text>
</comment>
<comment type="subcellular location">
    <subcellularLocation>
        <location evidence="1">Cytoplasm</location>
    </subcellularLocation>
</comment>
<comment type="similarity">
    <text evidence="1">Belongs to the CitD family.</text>
</comment>
<name>CITD_CITK8</name>
<accession>A8AJI8</accession>
<dbReference type="EMBL" id="CP000822">
    <property type="protein sequence ID" value="ABV13651.1"/>
    <property type="molecule type" value="Genomic_DNA"/>
</dbReference>
<dbReference type="RefSeq" id="WP_012133370.1">
    <property type="nucleotide sequence ID" value="NC_009792.1"/>
</dbReference>
<dbReference type="SMR" id="A8AJI8"/>
<dbReference type="STRING" id="290338.CKO_02542"/>
<dbReference type="GeneID" id="45136416"/>
<dbReference type="KEGG" id="cko:CKO_02542"/>
<dbReference type="HOGENOM" id="CLU_158489_0_0_6"/>
<dbReference type="OrthoDB" id="9798736at2"/>
<dbReference type="Proteomes" id="UP000008148">
    <property type="component" value="Chromosome"/>
</dbReference>
<dbReference type="GO" id="GO:0005737">
    <property type="term" value="C:cytoplasm"/>
    <property type="evidence" value="ECO:0007669"/>
    <property type="project" value="UniProtKB-SubCell"/>
</dbReference>
<dbReference type="HAMAP" id="MF_00805">
    <property type="entry name" value="CitD"/>
    <property type="match status" value="1"/>
</dbReference>
<dbReference type="InterPro" id="IPR006495">
    <property type="entry name" value="CitD"/>
</dbReference>
<dbReference type="InterPro" id="IPR023439">
    <property type="entry name" value="Mal_deCO2ase/Cit_lyase_ACP"/>
</dbReference>
<dbReference type="NCBIfam" id="TIGR01608">
    <property type="entry name" value="citD"/>
    <property type="match status" value="1"/>
</dbReference>
<dbReference type="NCBIfam" id="NF009726">
    <property type="entry name" value="PRK13253.1"/>
    <property type="match status" value="1"/>
</dbReference>
<dbReference type="Pfam" id="PF06857">
    <property type="entry name" value="ACP"/>
    <property type="match status" value="1"/>
</dbReference>
<dbReference type="PIRSF" id="PIRSF002736">
    <property type="entry name" value="Citrt_lyas_gamma"/>
    <property type="match status" value="1"/>
</dbReference>
<reference key="1">
    <citation type="submission" date="2007-08" db="EMBL/GenBank/DDBJ databases">
        <authorList>
            <consortium name="The Citrobacter koseri Genome Sequencing Project"/>
            <person name="McClelland M."/>
            <person name="Sanderson E.K."/>
            <person name="Porwollik S."/>
            <person name="Spieth J."/>
            <person name="Clifton W.S."/>
            <person name="Latreille P."/>
            <person name="Courtney L."/>
            <person name="Wang C."/>
            <person name="Pepin K."/>
            <person name="Bhonagiri V."/>
            <person name="Nash W."/>
            <person name="Johnson M."/>
            <person name="Thiruvilangam P."/>
            <person name="Wilson R."/>
        </authorList>
    </citation>
    <scope>NUCLEOTIDE SEQUENCE [LARGE SCALE GENOMIC DNA]</scope>
    <source>
        <strain>ATCC BAA-895 / CDC 4225-83 / SGSC4696</strain>
    </source>
</reference>
<proteinExistence type="inferred from homology"/>
<gene>
    <name evidence="1" type="primary">citD</name>
    <name type="ordered locus">CKO_02542</name>
</gene>
<sequence>MKIDQAAVAGTLESGDVMIRIAPLDTQDIDLQINSSVEKQFGDAIRATILDVLARYNVRGVQLNVDDKGALDCILRARLEALLARASGIPALPWEDRQ</sequence>